<feature type="chain" id="PRO_0000125142" description="Large ribosomal subunit protein uL22">
    <location>
        <begin position="1"/>
        <end position="111"/>
    </location>
</feature>
<sequence>MEAKAIAKYVRMSPMKVKIVLDLIRGKNVNEAFAILQYTPKDAAVVINKVLKSAVANAENNFNLDGNRLYVSEAYAGQGPTLKRFQPHAQGRAFSIKKRSSHITVIVKERD</sequence>
<evidence type="ECO:0000255" key="1">
    <source>
        <dbReference type="HAMAP-Rule" id="MF_01331"/>
    </source>
</evidence>
<evidence type="ECO:0000305" key="2"/>
<gene>
    <name evidence="1" type="primary">rplV</name>
    <name type="ordered locus">CA_C3128</name>
</gene>
<accession>Q97EI3</accession>
<reference key="1">
    <citation type="journal article" date="2001" name="J. Bacteriol.">
        <title>Genome sequence and comparative analysis of the solvent-producing bacterium Clostridium acetobutylicum.</title>
        <authorList>
            <person name="Noelling J."/>
            <person name="Breton G."/>
            <person name="Omelchenko M.V."/>
            <person name="Makarova K.S."/>
            <person name="Zeng Q."/>
            <person name="Gibson R."/>
            <person name="Lee H.M."/>
            <person name="Dubois J."/>
            <person name="Qiu D."/>
            <person name="Hitti J."/>
            <person name="Wolf Y.I."/>
            <person name="Tatusov R.L."/>
            <person name="Sabathe F."/>
            <person name="Doucette-Stamm L.A."/>
            <person name="Soucaille P."/>
            <person name="Daly M.J."/>
            <person name="Bennett G.N."/>
            <person name="Koonin E.V."/>
            <person name="Smith D.R."/>
        </authorList>
    </citation>
    <scope>NUCLEOTIDE SEQUENCE [LARGE SCALE GENOMIC DNA]</scope>
    <source>
        <strain>ATCC 824 / DSM 792 / JCM 1419 / IAM 19013 / LMG 5710 / NBRC 13948 / NRRL B-527 / VKM B-1787 / 2291 / W</strain>
    </source>
</reference>
<dbReference type="EMBL" id="AE001437">
    <property type="protein sequence ID" value="AAK81067.1"/>
    <property type="molecule type" value="Genomic_DNA"/>
</dbReference>
<dbReference type="PIR" id="H97284">
    <property type="entry name" value="H97284"/>
</dbReference>
<dbReference type="RefSeq" id="NP_349727.1">
    <property type="nucleotide sequence ID" value="NC_003030.1"/>
</dbReference>
<dbReference type="RefSeq" id="WP_010966407.1">
    <property type="nucleotide sequence ID" value="NC_003030.1"/>
</dbReference>
<dbReference type="SMR" id="Q97EI3"/>
<dbReference type="STRING" id="272562.CA_C3128"/>
<dbReference type="GeneID" id="44999615"/>
<dbReference type="KEGG" id="cac:CA_C3128"/>
<dbReference type="PATRIC" id="fig|272562.8.peg.3311"/>
<dbReference type="eggNOG" id="COG0091">
    <property type="taxonomic scope" value="Bacteria"/>
</dbReference>
<dbReference type="HOGENOM" id="CLU_083987_3_3_9"/>
<dbReference type="OrthoDB" id="9805969at2"/>
<dbReference type="Proteomes" id="UP000000814">
    <property type="component" value="Chromosome"/>
</dbReference>
<dbReference type="GO" id="GO:0022625">
    <property type="term" value="C:cytosolic large ribosomal subunit"/>
    <property type="evidence" value="ECO:0007669"/>
    <property type="project" value="TreeGrafter"/>
</dbReference>
<dbReference type="GO" id="GO:0019843">
    <property type="term" value="F:rRNA binding"/>
    <property type="evidence" value="ECO:0007669"/>
    <property type="project" value="UniProtKB-UniRule"/>
</dbReference>
<dbReference type="GO" id="GO:0003735">
    <property type="term" value="F:structural constituent of ribosome"/>
    <property type="evidence" value="ECO:0007669"/>
    <property type="project" value="InterPro"/>
</dbReference>
<dbReference type="GO" id="GO:0006412">
    <property type="term" value="P:translation"/>
    <property type="evidence" value="ECO:0007669"/>
    <property type="project" value="UniProtKB-UniRule"/>
</dbReference>
<dbReference type="CDD" id="cd00336">
    <property type="entry name" value="Ribosomal_L22"/>
    <property type="match status" value="1"/>
</dbReference>
<dbReference type="FunFam" id="3.90.470.10:FF:000011">
    <property type="entry name" value="50S ribosomal protein L22"/>
    <property type="match status" value="1"/>
</dbReference>
<dbReference type="Gene3D" id="3.90.470.10">
    <property type="entry name" value="Ribosomal protein L22/L17"/>
    <property type="match status" value="1"/>
</dbReference>
<dbReference type="HAMAP" id="MF_01331_B">
    <property type="entry name" value="Ribosomal_uL22_B"/>
    <property type="match status" value="1"/>
</dbReference>
<dbReference type="InterPro" id="IPR001063">
    <property type="entry name" value="Ribosomal_uL22"/>
</dbReference>
<dbReference type="InterPro" id="IPR005727">
    <property type="entry name" value="Ribosomal_uL22_bac/chlpt-type"/>
</dbReference>
<dbReference type="InterPro" id="IPR047867">
    <property type="entry name" value="Ribosomal_uL22_bac/org-type"/>
</dbReference>
<dbReference type="InterPro" id="IPR018260">
    <property type="entry name" value="Ribosomal_uL22_CS"/>
</dbReference>
<dbReference type="InterPro" id="IPR036394">
    <property type="entry name" value="Ribosomal_uL22_sf"/>
</dbReference>
<dbReference type="NCBIfam" id="TIGR01044">
    <property type="entry name" value="rplV_bact"/>
    <property type="match status" value="1"/>
</dbReference>
<dbReference type="PANTHER" id="PTHR13501">
    <property type="entry name" value="CHLOROPLAST 50S RIBOSOMAL PROTEIN L22-RELATED"/>
    <property type="match status" value="1"/>
</dbReference>
<dbReference type="PANTHER" id="PTHR13501:SF8">
    <property type="entry name" value="LARGE RIBOSOMAL SUBUNIT PROTEIN UL22M"/>
    <property type="match status" value="1"/>
</dbReference>
<dbReference type="Pfam" id="PF00237">
    <property type="entry name" value="Ribosomal_L22"/>
    <property type="match status" value="1"/>
</dbReference>
<dbReference type="SUPFAM" id="SSF54843">
    <property type="entry name" value="Ribosomal protein L22"/>
    <property type="match status" value="1"/>
</dbReference>
<dbReference type="PROSITE" id="PS00464">
    <property type="entry name" value="RIBOSOMAL_L22"/>
    <property type="match status" value="1"/>
</dbReference>
<proteinExistence type="inferred from homology"/>
<name>RL22_CLOAB</name>
<keyword id="KW-1185">Reference proteome</keyword>
<keyword id="KW-0687">Ribonucleoprotein</keyword>
<keyword id="KW-0689">Ribosomal protein</keyword>
<keyword id="KW-0694">RNA-binding</keyword>
<keyword id="KW-0699">rRNA-binding</keyword>
<protein>
    <recommendedName>
        <fullName evidence="1">Large ribosomal subunit protein uL22</fullName>
    </recommendedName>
    <alternativeName>
        <fullName evidence="2">50S ribosomal protein L22</fullName>
    </alternativeName>
</protein>
<organism>
    <name type="scientific">Clostridium acetobutylicum (strain ATCC 824 / DSM 792 / JCM 1419 / IAM 19013 / LMG 5710 / NBRC 13948 / NRRL B-527 / VKM B-1787 / 2291 / W)</name>
    <dbReference type="NCBI Taxonomy" id="272562"/>
    <lineage>
        <taxon>Bacteria</taxon>
        <taxon>Bacillati</taxon>
        <taxon>Bacillota</taxon>
        <taxon>Clostridia</taxon>
        <taxon>Eubacteriales</taxon>
        <taxon>Clostridiaceae</taxon>
        <taxon>Clostridium</taxon>
    </lineage>
</organism>
<comment type="function">
    <text evidence="1">This protein binds specifically to 23S rRNA; its binding is stimulated by other ribosomal proteins, e.g. L4, L17, and L20. It is important during the early stages of 50S assembly. It makes multiple contacts with different domains of the 23S rRNA in the assembled 50S subunit and ribosome (By similarity).</text>
</comment>
<comment type="function">
    <text evidence="1">The globular domain of the protein is located near the polypeptide exit tunnel on the outside of the subunit, while an extended beta-hairpin is found that lines the wall of the exit tunnel in the center of the 70S ribosome.</text>
</comment>
<comment type="subunit">
    <text evidence="1">Part of the 50S ribosomal subunit.</text>
</comment>
<comment type="similarity">
    <text evidence="1">Belongs to the universal ribosomal protein uL22 family.</text>
</comment>